<feature type="chain" id="PRO_0000314208" description="UPF0262 protein Rsph17025_0594">
    <location>
        <begin position="1"/>
        <end position="158"/>
    </location>
</feature>
<name>Y594_CERS5</name>
<organism>
    <name type="scientific">Cereibacter sphaeroides (strain ATCC 17025 / ATH 2.4.3)</name>
    <name type="common">Rhodobacter sphaeroides</name>
    <dbReference type="NCBI Taxonomy" id="349102"/>
    <lineage>
        <taxon>Bacteria</taxon>
        <taxon>Pseudomonadati</taxon>
        <taxon>Pseudomonadota</taxon>
        <taxon>Alphaproteobacteria</taxon>
        <taxon>Rhodobacterales</taxon>
        <taxon>Paracoccaceae</taxon>
        <taxon>Cereibacter</taxon>
    </lineage>
</organism>
<comment type="similarity">
    <text evidence="1">Belongs to the UPF0262 family.</text>
</comment>
<dbReference type="EMBL" id="CP000661">
    <property type="protein sequence ID" value="ABP69500.1"/>
    <property type="molecule type" value="Genomic_DNA"/>
</dbReference>
<dbReference type="STRING" id="349102.Rsph17025_0594"/>
<dbReference type="KEGG" id="rsq:Rsph17025_0594"/>
<dbReference type="eggNOG" id="COG5328">
    <property type="taxonomic scope" value="Bacteria"/>
</dbReference>
<dbReference type="HOGENOM" id="CLU_112904_0_0_5"/>
<dbReference type="BioCyc" id="RSPH349102:G1G8M-612-MONOMER"/>
<dbReference type="HAMAP" id="MF_00678">
    <property type="entry name" value="UPF0262"/>
    <property type="match status" value="1"/>
</dbReference>
<dbReference type="InterPro" id="IPR008321">
    <property type="entry name" value="UCP032146"/>
</dbReference>
<dbReference type="NCBIfam" id="NF002769">
    <property type="entry name" value="PRK02853.1"/>
    <property type="match status" value="1"/>
</dbReference>
<dbReference type="Pfam" id="PF06793">
    <property type="entry name" value="UPF0262"/>
    <property type="match status" value="1"/>
</dbReference>
<dbReference type="PIRSF" id="PIRSF032146">
    <property type="entry name" value="UCP032146"/>
    <property type="match status" value="1"/>
</dbReference>
<accession>A4WQ36</accession>
<evidence type="ECO:0000255" key="1">
    <source>
        <dbReference type="HAMAP-Rule" id="MF_00678"/>
    </source>
</evidence>
<protein>
    <recommendedName>
        <fullName evidence="1">UPF0262 protein Rsph17025_0594</fullName>
    </recommendedName>
</protein>
<reference key="1">
    <citation type="submission" date="2007-04" db="EMBL/GenBank/DDBJ databases">
        <title>Complete sequence of chromosome of Rhodobacter sphaeroides ATCC 17025.</title>
        <authorList>
            <consortium name="US DOE Joint Genome Institute"/>
            <person name="Copeland A."/>
            <person name="Lucas S."/>
            <person name="Lapidus A."/>
            <person name="Barry K."/>
            <person name="Detter J.C."/>
            <person name="Glavina del Rio T."/>
            <person name="Hammon N."/>
            <person name="Israni S."/>
            <person name="Dalin E."/>
            <person name="Tice H."/>
            <person name="Pitluck S."/>
            <person name="Chertkov O."/>
            <person name="Brettin T."/>
            <person name="Bruce D."/>
            <person name="Han C."/>
            <person name="Schmutz J."/>
            <person name="Larimer F."/>
            <person name="Land M."/>
            <person name="Hauser L."/>
            <person name="Kyrpides N."/>
            <person name="Kim E."/>
            <person name="Richardson P."/>
            <person name="Mackenzie C."/>
            <person name="Choudhary M."/>
            <person name="Donohue T.J."/>
            <person name="Kaplan S."/>
        </authorList>
    </citation>
    <scope>NUCLEOTIDE SEQUENCE [LARGE SCALE GENOMIC DNA]</scope>
    <source>
        <strain>ATCC 17025 / ATH 2.4.3</strain>
    </source>
</reference>
<gene>
    <name type="ordered locus">Rsph17025_0594</name>
</gene>
<proteinExistence type="inferred from homology"/>
<sequence>MNRICHIEIDQASPIPPTAEIEQERQVAIFDLLEENSFALPPREGKPPVEGPFRLTLAIREGRLVFDIRSQEDEKVGEFHLSLGPFRQVVKDYFQICESYFEAVKRLPPSQIEAIDMARRGIHNEGARVLKERLEGKAEVDIDTARRLFTLICVLHWG</sequence>